<feature type="chain" id="PRO_0000252848" description="ATP-dependent Clp protease proteolytic subunit">
    <location>
        <begin position="1"/>
        <end position="212"/>
    </location>
</feature>
<feature type="active site" description="Nucleophile" evidence="1">
    <location>
        <position position="113"/>
    </location>
</feature>
<feature type="active site" evidence="1">
    <location>
        <position position="138"/>
    </location>
</feature>
<gene>
    <name evidence="1" type="primary">clpP</name>
    <name type="ordered locus">Sde_1608</name>
</gene>
<name>CLPP_SACD2</name>
<reference key="1">
    <citation type="journal article" date="2008" name="PLoS Genet.">
        <title>Complete genome sequence of the complex carbohydrate-degrading marine bacterium, Saccharophagus degradans strain 2-40 T.</title>
        <authorList>
            <person name="Weiner R.M."/>
            <person name="Taylor L.E. II"/>
            <person name="Henrissat B."/>
            <person name="Hauser L."/>
            <person name="Land M."/>
            <person name="Coutinho P.M."/>
            <person name="Rancurel C."/>
            <person name="Saunders E.H."/>
            <person name="Longmire A.G."/>
            <person name="Zhang H."/>
            <person name="Bayer E.A."/>
            <person name="Gilbert H.J."/>
            <person name="Larimer F."/>
            <person name="Zhulin I.B."/>
            <person name="Ekborg N.A."/>
            <person name="Lamed R."/>
            <person name="Richardson P.M."/>
            <person name="Borovok I."/>
            <person name="Hutcheson S."/>
        </authorList>
    </citation>
    <scope>NUCLEOTIDE SEQUENCE [LARGE SCALE GENOMIC DNA]</scope>
    <source>
        <strain>2-40 / ATCC 43961 / DSM 17024</strain>
    </source>
</reference>
<organism>
    <name type="scientific">Saccharophagus degradans (strain 2-40 / ATCC 43961 / DSM 17024)</name>
    <dbReference type="NCBI Taxonomy" id="203122"/>
    <lineage>
        <taxon>Bacteria</taxon>
        <taxon>Pseudomonadati</taxon>
        <taxon>Pseudomonadota</taxon>
        <taxon>Gammaproteobacteria</taxon>
        <taxon>Cellvibrionales</taxon>
        <taxon>Cellvibrionaceae</taxon>
        <taxon>Saccharophagus</taxon>
    </lineage>
</organism>
<proteinExistence type="inferred from homology"/>
<accession>Q21KA9</accession>
<protein>
    <recommendedName>
        <fullName evidence="1">ATP-dependent Clp protease proteolytic subunit</fullName>
        <ecNumber evidence="1">3.4.21.92</ecNumber>
    </recommendedName>
    <alternativeName>
        <fullName evidence="1">Endopeptidase Clp</fullName>
    </alternativeName>
</protein>
<keyword id="KW-0963">Cytoplasm</keyword>
<keyword id="KW-0378">Hydrolase</keyword>
<keyword id="KW-0645">Protease</keyword>
<keyword id="KW-1185">Reference proteome</keyword>
<keyword id="KW-0720">Serine protease</keyword>
<evidence type="ECO:0000255" key="1">
    <source>
        <dbReference type="HAMAP-Rule" id="MF_00444"/>
    </source>
</evidence>
<comment type="function">
    <text evidence="1">Cleaves peptides in various proteins in a process that requires ATP hydrolysis. Has a chymotrypsin-like activity. Plays a major role in the degradation of misfolded proteins.</text>
</comment>
<comment type="catalytic activity">
    <reaction evidence="1">
        <text>Hydrolysis of proteins to small peptides in the presence of ATP and magnesium. alpha-casein is the usual test substrate. In the absence of ATP, only oligopeptides shorter than five residues are hydrolyzed (such as succinyl-Leu-Tyr-|-NHMec, and Leu-Tyr-Leu-|-Tyr-Trp, in which cleavage of the -Tyr-|-Leu- and -Tyr-|-Trp bonds also occurs).</text>
        <dbReference type="EC" id="3.4.21.92"/>
    </reaction>
</comment>
<comment type="subunit">
    <text evidence="1">Fourteen ClpP subunits assemble into 2 heptameric rings which stack back to back to give a disk-like structure with a central cavity, resembling the structure of eukaryotic proteasomes.</text>
</comment>
<comment type="subcellular location">
    <subcellularLocation>
        <location evidence="1">Cytoplasm</location>
    </subcellularLocation>
</comment>
<comment type="similarity">
    <text evidence="1">Belongs to the peptidase S14 family.</text>
</comment>
<dbReference type="EC" id="3.4.21.92" evidence="1"/>
<dbReference type="EMBL" id="CP000282">
    <property type="protein sequence ID" value="ABD80870.1"/>
    <property type="molecule type" value="Genomic_DNA"/>
</dbReference>
<dbReference type="RefSeq" id="WP_011468090.1">
    <property type="nucleotide sequence ID" value="NC_007912.1"/>
</dbReference>
<dbReference type="SMR" id="Q21KA9"/>
<dbReference type="STRING" id="203122.Sde_1608"/>
<dbReference type="MEROPS" id="S14.001"/>
<dbReference type="GeneID" id="98613286"/>
<dbReference type="KEGG" id="sde:Sde_1608"/>
<dbReference type="eggNOG" id="COG0740">
    <property type="taxonomic scope" value="Bacteria"/>
</dbReference>
<dbReference type="HOGENOM" id="CLU_058707_3_2_6"/>
<dbReference type="OrthoDB" id="9802800at2"/>
<dbReference type="Proteomes" id="UP000001947">
    <property type="component" value="Chromosome"/>
</dbReference>
<dbReference type="GO" id="GO:0005737">
    <property type="term" value="C:cytoplasm"/>
    <property type="evidence" value="ECO:0007669"/>
    <property type="project" value="UniProtKB-SubCell"/>
</dbReference>
<dbReference type="GO" id="GO:0009368">
    <property type="term" value="C:endopeptidase Clp complex"/>
    <property type="evidence" value="ECO:0007669"/>
    <property type="project" value="TreeGrafter"/>
</dbReference>
<dbReference type="GO" id="GO:0004176">
    <property type="term" value="F:ATP-dependent peptidase activity"/>
    <property type="evidence" value="ECO:0007669"/>
    <property type="project" value="InterPro"/>
</dbReference>
<dbReference type="GO" id="GO:0051117">
    <property type="term" value="F:ATPase binding"/>
    <property type="evidence" value="ECO:0007669"/>
    <property type="project" value="TreeGrafter"/>
</dbReference>
<dbReference type="GO" id="GO:0004252">
    <property type="term" value="F:serine-type endopeptidase activity"/>
    <property type="evidence" value="ECO:0007669"/>
    <property type="project" value="UniProtKB-UniRule"/>
</dbReference>
<dbReference type="GO" id="GO:0006515">
    <property type="term" value="P:protein quality control for misfolded or incompletely synthesized proteins"/>
    <property type="evidence" value="ECO:0007669"/>
    <property type="project" value="TreeGrafter"/>
</dbReference>
<dbReference type="CDD" id="cd07017">
    <property type="entry name" value="S14_ClpP_2"/>
    <property type="match status" value="1"/>
</dbReference>
<dbReference type="FunFam" id="3.90.226.10:FF:000001">
    <property type="entry name" value="ATP-dependent Clp protease proteolytic subunit"/>
    <property type="match status" value="1"/>
</dbReference>
<dbReference type="Gene3D" id="3.90.226.10">
    <property type="entry name" value="2-enoyl-CoA Hydratase, Chain A, domain 1"/>
    <property type="match status" value="1"/>
</dbReference>
<dbReference type="HAMAP" id="MF_00444">
    <property type="entry name" value="ClpP"/>
    <property type="match status" value="1"/>
</dbReference>
<dbReference type="InterPro" id="IPR001907">
    <property type="entry name" value="ClpP"/>
</dbReference>
<dbReference type="InterPro" id="IPR029045">
    <property type="entry name" value="ClpP/crotonase-like_dom_sf"/>
</dbReference>
<dbReference type="InterPro" id="IPR023562">
    <property type="entry name" value="ClpP/TepA"/>
</dbReference>
<dbReference type="InterPro" id="IPR033135">
    <property type="entry name" value="ClpP_His_AS"/>
</dbReference>
<dbReference type="InterPro" id="IPR018215">
    <property type="entry name" value="ClpP_Ser_AS"/>
</dbReference>
<dbReference type="NCBIfam" id="TIGR00493">
    <property type="entry name" value="clpP"/>
    <property type="match status" value="1"/>
</dbReference>
<dbReference type="NCBIfam" id="NF001368">
    <property type="entry name" value="PRK00277.1"/>
    <property type="match status" value="1"/>
</dbReference>
<dbReference type="NCBIfam" id="NF009205">
    <property type="entry name" value="PRK12553.1"/>
    <property type="match status" value="1"/>
</dbReference>
<dbReference type="PANTHER" id="PTHR10381">
    <property type="entry name" value="ATP-DEPENDENT CLP PROTEASE PROTEOLYTIC SUBUNIT"/>
    <property type="match status" value="1"/>
</dbReference>
<dbReference type="PANTHER" id="PTHR10381:SF70">
    <property type="entry name" value="ATP-DEPENDENT CLP PROTEASE PROTEOLYTIC SUBUNIT"/>
    <property type="match status" value="1"/>
</dbReference>
<dbReference type="Pfam" id="PF00574">
    <property type="entry name" value="CLP_protease"/>
    <property type="match status" value="1"/>
</dbReference>
<dbReference type="PRINTS" id="PR00127">
    <property type="entry name" value="CLPPROTEASEP"/>
</dbReference>
<dbReference type="SUPFAM" id="SSF52096">
    <property type="entry name" value="ClpP/crotonase"/>
    <property type="match status" value="1"/>
</dbReference>
<dbReference type="PROSITE" id="PS00382">
    <property type="entry name" value="CLP_PROTEASE_HIS"/>
    <property type="match status" value="1"/>
</dbReference>
<dbReference type="PROSITE" id="PS00381">
    <property type="entry name" value="CLP_PROTEASE_SER"/>
    <property type="match status" value="1"/>
</dbReference>
<sequence length="212" mass="23383">MSNIDLSASSNLNVENTLVPMVVEQTARGERSYDIYSRLLKERVIFLVGQVEDHMANLVVAQMLFLEAENPDKDIHLYINSPGGSVTAGLSIYDTMQFIKPDVSTMCIGQACSMGAFLLTAGAKGKRFCLPNARTMIHQPSGGAQGQASDIHIQAQEILKLRERLNEIMAGHTGRGVEEIARDTERDRFMSAHESVEYGLIDKVLERRVGGE</sequence>